<dbReference type="EC" id="2.4.1.15" evidence="1"/>
<dbReference type="EMBL" id="CP000946">
    <property type="protein sequence ID" value="ACA77388.1"/>
    <property type="molecule type" value="Genomic_DNA"/>
</dbReference>
<dbReference type="RefSeq" id="WP_001295646.1">
    <property type="nucleotide sequence ID" value="NZ_MTFT01000011.1"/>
</dbReference>
<dbReference type="SMR" id="B1J0J4"/>
<dbReference type="CAZy" id="GT20">
    <property type="family name" value="Glycosyltransferase Family 20"/>
</dbReference>
<dbReference type="GeneID" id="93776199"/>
<dbReference type="KEGG" id="ecl:EcolC_1738"/>
<dbReference type="HOGENOM" id="CLU_002351_7_1_6"/>
<dbReference type="UniPathway" id="UPA00299"/>
<dbReference type="GO" id="GO:0003825">
    <property type="term" value="F:alpha,alpha-trehalose-phosphate synthase (UDP-forming) activity"/>
    <property type="evidence" value="ECO:0007669"/>
    <property type="project" value="UniProtKB-EC"/>
</dbReference>
<dbReference type="GO" id="GO:0005992">
    <property type="term" value="P:trehalose biosynthetic process"/>
    <property type="evidence" value="ECO:0007669"/>
    <property type="project" value="UniProtKB-UniPathway"/>
</dbReference>
<dbReference type="CDD" id="cd03788">
    <property type="entry name" value="GT20_TPS"/>
    <property type="match status" value="1"/>
</dbReference>
<dbReference type="FunFam" id="3.40.50.2000:FF:000024">
    <property type="entry name" value="Trehalose-6-phosphate synthase"/>
    <property type="match status" value="1"/>
</dbReference>
<dbReference type="Gene3D" id="3.40.50.2000">
    <property type="entry name" value="Glycogen Phosphorylase B"/>
    <property type="match status" value="2"/>
</dbReference>
<dbReference type="InterPro" id="IPR001830">
    <property type="entry name" value="Glyco_trans_20"/>
</dbReference>
<dbReference type="InterPro" id="IPR012766">
    <property type="entry name" value="Trehalose_OtsA"/>
</dbReference>
<dbReference type="NCBIfam" id="NF007513">
    <property type="entry name" value="PRK10117.1"/>
    <property type="match status" value="1"/>
</dbReference>
<dbReference type="NCBIfam" id="TIGR02400">
    <property type="entry name" value="trehalose_OtsA"/>
    <property type="match status" value="1"/>
</dbReference>
<dbReference type="PANTHER" id="PTHR10788:SF106">
    <property type="entry name" value="BCDNA.GH08860"/>
    <property type="match status" value="1"/>
</dbReference>
<dbReference type="PANTHER" id="PTHR10788">
    <property type="entry name" value="TREHALOSE-6-PHOSPHATE SYNTHASE"/>
    <property type="match status" value="1"/>
</dbReference>
<dbReference type="Pfam" id="PF00982">
    <property type="entry name" value="Glyco_transf_20"/>
    <property type="match status" value="1"/>
</dbReference>
<dbReference type="SUPFAM" id="SSF53756">
    <property type="entry name" value="UDP-Glycosyltransferase/glycogen phosphorylase"/>
    <property type="match status" value="1"/>
</dbReference>
<reference key="1">
    <citation type="submission" date="2008-02" db="EMBL/GenBank/DDBJ databases">
        <title>Complete sequence of Escherichia coli C str. ATCC 8739.</title>
        <authorList>
            <person name="Copeland A."/>
            <person name="Lucas S."/>
            <person name="Lapidus A."/>
            <person name="Glavina del Rio T."/>
            <person name="Dalin E."/>
            <person name="Tice H."/>
            <person name="Bruce D."/>
            <person name="Goodwin L."/>
            <person name="Pitluck S."/>
            <person name="Kiss H."/>
            <person name="Brettin T."/>
            <person name="Detter J.C."/>
            <person name="Han C."/>
            <person name="Kuske C.R."/>
            <person name="Schmutz J."/>
            <person name="Larimer F."/>
            <person name="Land M."/>
            <person name="Hauser L."/>
            <person name="Kyrpides N."/>
            <person name="Mikhailova N."/>
            <person name="Ingram L."/>
            <person name="Richardson P."/>
        </authorList>
    </citation>
    <scope>NUCLEOTIDE SEQUENCE [LARGE SCALE GENOMIC DNA]</scope>
    <source>
        <strain>ATCC 8739 / DSM 1576 / NBRC 3972 / NCIMB 8545 / WDCM 00012 / Crooks</strain>
    </source>
</reference>
<proteinExistence type="inferred from homology"/>
<accession>B1J0J4</accession>
<name>OTSA_ECOLC</name>
<organism>
    <name type="scientific">Escherichia coli (strain ATCC 8739 / DSM 1576 / NBRC 3972 / NCIMB 8545 / WDCM 00012 / Crooks)</name>
    <dbReference type="NCBI Taxonomy" id="481805"/>
    <lineage>
        <taxon>Bacteria</taxon>
        <taxon>Pseudomonadati</taxon>
        <taxon>Pseudomonadota</taxon>
        <taxon>Gammaproteobacteria</taxon>
        <taxon>Enterobacterales</taxon>
        <taxon>Enterobacteriaceae</taxon>
        <taxon>Escherichia</taxon>
    </lineage>
</organism>
<feature type="chain" id="PRO_0000348893" description="Trehalose-6-phosphate synthase">
    <location>
        <begin position="1"/>
        <end position="474"/>
    </location>
</feature>
<feature type="binding site" evidence="1">
    <location>
        <position position="10"/>
    </location>
    <ligand>
        <name>D-glucose 6-phosphate</name>
        <dbReference type="ChEBI" id="CHEBI:61548"/>
    </ligand>
</feature>
<feature type="binding site" evidence="1">
    <location>
        <begin position="22"/>
        <end position="23"/>
    </location>
    <ligand>
        <name>UDP-alpha-D-glucose</name>
        <dbReference type="ChEBI" id="CHEBI:58885"/>
    </ligand>
</feature>
<feature type="binding site" evidence="1">
    <location>
        <position position="77"/>
    </location>
    <ligand>
        <name>D-glucose 6-phosphate</name>
        <dbReference type="ChEBI" id="CHEBI:61548"/>
    </ligand>
</feature>
<feature type="binding site" evidence="1">
    <location>
        <position position="131"/>
    </location>
    <ligand>
        <name>D-glucose 6-phosphate</name>
        <dbReference type="ChEBI" id="CHEBI:61548"/>
    </ligand>
</feature>
<feature type="binding site" evidence="1">
    <location>
        <position position="263"/>
    </location>
    <ligand>
        <name>UDP-alpha-D-glucose</name>
        <dbReference type="ChEBI" id="CHEBI:58885"/>
    </ligand>
</feature>
<feature type="binding site" evidence="1">
    <location>
        <position position="268"/>
    </location>
    <ligand>
        <name>UDP-alpha-D-glucose</name>
        <dbReference type="ChEBI" id="CHEBI:58885"/>
    </ligand>
</feature>
<feature type="binding site" evidence="1">
    <location>
        <position position="301"/>
    </location>
    <ligand>
        <name>D-glucose 6-phosphate</name>
        <dbReference type="ChEBI" id="CHEBI:61548"/>
    </ligand>
</feature>
<feature type="binding site" evidence="1">
    <location>
        <position position="340"/>
    </location>
    <ligand>
        <name>UDP-alpha-D-glucose</name>
        <dbReference type="ChEBI" id="CHEBI:58885"/>
    </ligand>
</feature>
<feature type="binding site" evidence="1">
    <location>
        <begin position="366"/>
        <end position="370"/>
    </location>
    <ligand>
        <name>UDP-alpha-D-glucose</name>
        <dbReference type="ChEBI" id="CHEBI:58885"/>
    </ligand>
</feature>
<feature type="site" description="Involved in alpha anomer selectivity" evidence="1">
    <location>
        <position position="86"/>
    </location>
</feature>
<feature type="site" description="Involved in alpha anomer selectivity" evidence="1">
    <location>
        <position position="156"/>
    </location>
</feature>
<evidence type="ECO:0000250" key="1">
    <source>
        <dbReference type="UniProtKB" id="P31677"/>
    </source>
</evidence>
<comment type="function">
    <text evidence="1">Probably involved in the osmoprotection via the biosynthesis of trehalose. Catalyzes the transfer of glucose from UDP-alpha-D-glucose (UDP-Glc) to D-glucose 6-phosphate (Glc-6-P) to form trehalose-6-phosphate. Acts with retention of the anomeric configuration of the UDP-sugar donor.</text>
</comment>
<comment type="catalytic activity">
    <reaction evidence="1">
        <text>D-glucose 6-phosphate + UDP-alpha-D-glucose = alpha,alpha-trehalose 6-phosphate + UDP + H(+)</text>
        <dbReference type="Rhea" id="RHEA:18889"/>
        <dbReference type="ChEBI" id="CHEBI:15378"/>
        <dbReference type="ChEBI" id="CHEBI:58223"/>
        <dbReference type="ChEBI" id="CHEBI:58429"/>
        <dbReference type="ChEBI" id="CHEBI:58885"/>
        <dbReference type="ChEBI" id="CHEBI:61548"/>
        <dbReference type="EC" id="2.4.1.15"/>
    </reaction>
</comment>
<comment type="pathway">
    <text evidence="1">Glycan biosynthesis; trehalose biosynthesis.</text>
</comment>
<comment type="subunit">
    <text evidence="1">Homotetramer.</text>
</comment>
<comment type="similarity">
    <text evidence="1">Belongs to the glycosyltransferase 20 family.</text>
</comment>
<gene>
    <name evidence="1" type="primary">otsA</name>
    <name type="ordered locus">EcolC_1738</name>
</gene>
<sequence>MSRLVVVSNRIAPPDEHAASAGGLAVGILGALKAAGGLWFGWSGETGNEDQPLKKVKKGNITWASFNLSEQDLDEYYNQFSNAVLWPAFHYRLDLVQFQRPAWDGYLRVNALLADKLLPLLQDDDIIWIHDYHLLPFAHELRKRGVNNRIGFFLHIPFPTPEIFNALPTYDTLLEQLCDYDLLGFQTENDRLAFLDCLSNLTRVTTRSAKSHTAWGKAFRTEVYPIGIEPKEIAKQAAGPLPPKLAQLKAELKNVQNIFSVERLDYSKGLPERFLAYEALLEKYPQHHGKIRYTQIAPTSRGDVQAYQDIRHQLENEAGRINGKYGQLGWTPLYYLNQHFDRKLLMKIFRYSDVGLVTPLRDGMNLVAKEYVAAQDPANPGVLVLSQFAGAANELTSALIVNPYDRDEVAAALDRALTMSLAERISRHAEMLDVIVKNDINHWQECFISDLKQIVPRSAESQQRDKVATFPKLA</sequence>
<keyword id="KW-0328">Glycosyltransferase</keyword>
<keyword id="KW-0808">Transferase</keyword>
<protein>
    <recommendedName>
        <fullName evidence="1">Trehalose-6-phosphate synthase</fullName>
        <shortName evidence="1">TPS</shortName>
        <ecNumber evidence="1">2.4.1.15</ecNumber>
    </recommendedName>
    <alternativeName>
        <fullName evidence="1">Alpha,alpha-trehalose-phosphate synthase [UDP-forming]</fullName>
    </alternativeName>
    <alternativeName>
        <fullName evidence="1">Osmoregulatory trehalose synthesis protein A</fullName>
        <shortName evidence="1">OtsA</shortName>
    </alternativeName>
    <alternativeName>
        <fullName evidence="1">UDP-glucose-glucosephosphate glucosyltransferase</fullName>
    </alternativeName>
</protein>